<keyword id="KW-0963">Cytoplasm</keyword>
<keyword id="KW-0238">DNA-binding</keyword>
<keyword id="KW-1185">Reference proteome</keyword>
<keyword id="KW-0677">Repeat</keyword>
<keyword id="KW-0804">Transcription</keyword>
<keyword id="KW-0805">Transcription regulation</keyword>
<comment type="subunit">
    <text evidence="1">Forms oligomers.</text>
</comment>
<comment type="subcellular location">
    <subcellularLocation>
        <location evidence="1">Cytoplasm</location>
        <location evidence="1">Nucleoid</location>
    </subcellularLocation>
</comment>
<comment type="similarity">
    <text evidence="1">Belongs to the MraZ family.</text>
</comment>
<name>MRAZ_DEIDV</name>
<evidence type="ECO:0000255" key="1">
    <source>
        <dbReference type="HAMAP-Rule" id="MF_01008"/>
    </source>
</evidence>
<evidence type="ECO:0000255" key="2">
    <source>
        <dbReference type="PROSITE-ProRule" id="PRU01076"/>
    </source>
</evidence>
<gene>
    <name evidence="1" type="primary">mraZ</name>
    <name type="ordered locus">Deide_08661</name>
</gene>
<reference key="1">
    <citation type="journal article" date="2009" name="PLoS Genet.">
        <title>Alliance of proteomics and genomics to unravel the specificities of Sahara bacterium Deinococcus deserti.</title>
        <authorList>
            <person name="de Groot A."/>
            <person name="Dulermo R."/>
            <person name="Ortet P."/>
            <person name="Blanchard L."/>
            <person name="Guerin P."/>
            <person name="Fernandez B."/>
            <person name="Vacherie B."/>
            <person name="Dossat C."/>
            <person name="Jolivet E."/>
            <person name="Siguier P."/>
            <person name="Chandler M."/>
            <person name="Barakat M."/>
            <person name="Dedieu A."/>
            <person name="Barbe V."/>
            <person name="Heulin T."/>
            <person name="Sommer S."/>
            <person name="Achouak W."/>
            <person name="Armengaud J."/>
        </authorList>
    </citation>
    <scope>NUCLEOTIDE SEQUENCE [LARGE SCALE GENOMIC DNA]</scope>
    <source>
        <strain>DSM 17065 / CIP 109153 / LMG 22923 / VCD115</strain>
    </source>
</reference>
<accession>C1D1L7</accession>
<dbReference type="EMBL" id="CP001114">
    <property type="protein sequence ID" value="ACO45741.1"/>
    <property type="molecule type" value="Genomic_DNA"/>
</dbReference>
<dbReference type="RefSeq" id="WP_012692864.1">
    <property type="nucleotide sequence ID" value="NC_012526.1"/>
</dbReference>
<dbReference type="SMR" id="C1D1L7"/>
<dbReference type="STRING" id="546414.Deide_08661"/>
<dbReference type="PaxDb" id="546414-Deide_08661"/>
<dbReference type="KEGG" id="ddr:Deide_08661"/>
<dbReference type="eggNOG" id="COG2001">
    <property type="taxonomic scope" value="Bacteria"/>
</dbReference>
<dbReference type="HOGENOM" id="CLU_107907_0_3_0"/>
<dbReference type="OrthoDB" id="9807753at2"/>
<dbReference type="Proteomes" id="UP000002208">
    <property type="component" value="Chromosome"/>
</dbReference>
<dbReference type="GO" id="GO:0005737">
    <property type="term" value="C:cytoplasm"/>
    <property type="evidence" value="ECO:0007669"/>
    <property type="project" value="UniProtKB-UniRule"/>
</dbReference>
<dbReference type="GO" id="GO:0009295">
    <property type="term" value="C:nucleoid"/>
    <property type="evidence" value="ECO:0007669"/>
    <property type="project" value="UniProtKB-SubCell"/>
</dbReference>
<dbReference type="GO" id="GO:0003700">
    <property type="term" value="F:DNA-binding transcription factor activity"/>
    <property type="evidence" value="ECO:0007669"/>
    <property type="project" value="UniProtKB-UniRule"/>
</dbReference>
<dbReference type="GO" id="GO:0000976">
    <property type="term" value="F:transcription cis-regulatory region binding"/>
    <property type="evidence" value="ECO:0007669"/>
    <property type="project" value="TreeGrafter"/>
</dbReference>
<dbReference type="GO" id="GO:2000143">
    <property type="term" value="P:negative regulation of DNA-templated transcription initiation"/>
    <property type="evidence" value="ECO:0007669"/>
    <property type="project" value="TreeGrafter"/>
</dbReference>
<dbReference type="CDD" id="cd16321">
    <property type="entry name" value="MraZ_C"/>
    <property type="match status" value="1"/>
</dbReference>
<dbReference type="CDD" id="cd16320">
    <property type="entry name" value="MraZ_N"/>
    <property type="match status" value="1"/>
</dbReference>
<dbReference type="Gene3D" id="3.40.1550.20">
    <property type="entry name" value="Transcriptional regulator MraZ domain"/>
    <property type="match status" value="1"/>
</dbReference>
<dbReference type="HAMAP" id="MF_01008">
    <property type="entry name" value="MraZ"/>
    <property type="match status" value="1"/>
</dbReference>
<dbReference type="InterPro" id="IPR003444">
    <property type="entry name" value="MraZ"/>
</dbReference>
<dbReference type="InterPro" id="IPR035644">
    <property type="entry name" value="MraZ_C"/>
</dbReference>
<dbReference type="InterPro" id="IPR020603">
    <property type="entry name" value="MraZ_dom"/>
</dbReference>
<dbReference type="InterPro" id="IPR035642">
    <property type="entry name" value="MraZ_N"/>
</dbReference>
<dbReference type="InterPro" id="IPR038619">
    <property type="entry name" value="MraZ_sf"/>
</dbReference>
<dbReference type="InterPro" id="IPR007159">
    <property type="entry name" value="SpoVT-AbrB_dom"/>
</dbReference>
<dbReference type="InterPro" id="IPR037914">
    <property type="entry name" value="SpoVT-AbrB_sf"/>
</dbReference>
<dbReference type="NCBIfam" id="TIGR00242">
    <property type="entry name" value="division/cell wall cluster transcriptional repressor MraZ"/>
    <property type="match status" value="1"/>
</dbReference>
<dbReference type="PANTHER" id="PTHR34701">
    <property type="entry name" value="TRANSCRIPTIONAL REGULATOR MRAZ"/>
    <property type="match status" value="1"/>
</dbReference>
<dbReference type="PANTHER" id="PTHR34701:SF1">
    <property type="entry name" value="TRANSCRIPTIONAL REGULATOR MRAZ"/>
    <property type="match status" value="1"/>
</dbReference>
<dbReference type="Pfam" id="PF02381">
    <property type="entry name" value="MraZ"/>
    <property type="match status" value="2"/>
</dbReference>
<dbReference type="SUPFAM" id="SSF89447">
    <property type="entry name" value="AbrB/MazE/MraZ-like"/>
    <property type="match status" value="1"/>
</dbReference>
<dbReference type="PROSITE" id="PS51740">
    <property type="entry name" value="SPOVT_ABRB"/>
    <property type="match status" value="2"/>
</dbReference>
<protein>
    <recommendedName>
        <fullName>Transcriptional regulator MraZ</fullName>
    </recommendedName>
</protein>
<feature type="chain" id="PRO_1000213170" description="Transcriptional regulator MraZ">
    <location>
        <begin position="1"/>
        <end position="142"/>
    </location>
</feature>
<feature type="domain" description="SpoVT-AbrB 1" evidence="2">
    <location>
        <begin position="5"/>
        <end position="47"/>
    </location>
</feature>
<feature type="domain" description="SpoVT-AbrB 2" evidence="2">
    <location>
        <begin position="76"/>
        <end position="119"/>
    </location>
</feature>
<organism>
    <name type="scientific">Deinococcus deserti (strain DSM 17065 / CIP 109153 / LMG 22923 / VCD115)</name>
    <dbReference type="NCBI Taxonomy" id="546414"/>
    <lineage>
        <taxon>Bacteria</taxon>
        <taxon>Thermotogati</taxon>
        <taxon>Deinococcota</taxon>
        <taxon>Deinococci</taxon>
        <taxon>Deinococcales</taxon>
        <taxon>Deinococcaceae</taxon>
        <taxon>Deinococcus</taxon>
    </lineage>
</organism>
<sequence>MPFGEYPYTIDDKGRVVMPPPFREFVEDGMILTRGMEGCLYVFPLASWRRVEEQLEGLPLTDAESRAFVRFFYSGANKARLDNQSRVSVPQTLRTFAGLDGDVIVAGAPGRLELWNPGRWEEAINAVQHTPPKPDLLANFVA</sequence>
<proteinExistence type="inferred from homology"/>